<comment type="similarity">
    <text evidence="1">Belongs to the universal ribosomal protein uS9 family.</text>
</comment>
<reference key="1">
    <citation type="journal article" date="2006" name="J. Bacteriol.">
        <title>Comparison of the genome sequence of the poultry pathogen Bordetella avium with those of B. bronchiseptica, B. pertussis, and B. parapertussis reveals extensive diversity in surface structures associated with host interaction.</title>
        <authorList>
            <person name="Sebaihia M."/>
            <person name="Preston A."/>
            <person name="Maskell D.J."/>
            <person name="Kuzmiak H."/>
            <person name="Connell T.D."/>
            <person name="King N.D."/>
            <person name="Orndorff P.E."/>
            <person name="Miyamoto D.M."/>
            <person name="Thomson N.R."/>
            <person name="Harris D."/>
            <person name="Goble A."/>
            <person name="Lord A."/>
            <person name="Murphy L."/>
            <person name="Quail M.A."/>
            <person name="Rutter S."/>
            <person name="Squares R."/>
            <person name="Squares S."/>
            <person name="Woodward J."/>
            <person name="Parkhill J."/>
            <person name="Temple L.M."/>
        </authorList>
    </citation>
    <scope>NUCLEOTIDE SEQUENCE [LARGE SCALE GENOMIC DNA]</scope>
    <source>
        <strain>197N</strain>
    </source>
</reference>
<protein>
    <recommendedName>
        <fullName evidence="1">Small ribosomal subunit protein uS9</fullName>
    </recommendedName>
    <alternativeName>
        <fullName evidence="2">30S ribosomal protein S9</fullName>
    </alternativeName>
</protein>
<proteinExistence type="inferred from homology"/>
<organism>
    <name type="scientific">Bordetella avium (strain 197N)</name>
    <dbReference type="NCBI Taxonomy" id="360910"/>
    <lineage>
        <taxon>Bacteria</taxon>
        <taxon>Pseudomonadati</taxon>
        <taxon>Pseudomonadota</taxon>
        <taxon>Betaproteobacteria</taxon>
        <taxon>Burkholderiales</taxon>
        <taxon>Alcaligenaceae</taxon>
        <taxon>Bordetella</taxon>
    </lineage>
</organism>
<feature type="chain" id="PRO_1000051172" description="Small ribosomal subunit protein uS9">
    <location>
        <begin position="1"/>
        <end position="130"/>
    </location>
</feature>
<evidence type="ECO:0000255" key="1">
    <source>
        <dbReference type="HAMAP-Rule" id="MF_00532"/>
    </source>
</evidence>
<evidence type="ECO:0000305" key="2"/>
<name>RS9_BORA1</name>
<accession>Q2KV03</accession>
<keyword id="KW-1185">Reference proteome</keyword>
<keyword id="KW-0687">Ribonucleoprotein</keyword>
<keyword id="KW-0689">Ribosomal protein</keyword>
<gene>
    <name evidence="1" type="primary">rpsI</name>
    <name type="ordered locus">BAV2969</name>
</gene>
<dbReference type="EMBL" id="AM167904">
    <property type="protein sequence ID" value="CAJ50579.1"/>
    <property type="molecule type" value="Genomic_DNA"/>
</dbReference>
<dbReference type="RefSeq" id="WP_012418608.1">
    <property type="nucleotide sequence ID" value="NC_010645.1"/>
</dbReference>
<dbReference type="SMR" id="Q2KV03"/>
<dbReference type="STRING" id="360910.BAV2969"/>
<dbReference type="GeneID" id="92995513"/>
<dbReference type="KEGG" id="bav:BAV2969"/>
<dbReference type="eggNOG" id="COG0103">
    <property type="taxonomic scope" value="Bacteria"/>
</dbReference>
<dbReference type="HOGENOM" id="CLU_046483_2_1_4"/>
<dbReference type="OrthoDB" id="9803965at2"/>
<dbReference type="Proteomes" id="UP000001977">
    <property type="component" value="Chromosome"/>
</dbReference>
<dbReference type="GO" id="GO:0022627">
    <property type="term" value="C:cytosolic small ribosomal subunit"/>
    <property type="evidence" value="ECO:0007669"/>
    <property type="project" value="TreeGrafter"/>
</dbReference>
<dbReference type="GO" id="GO:0003723">
    <property type="term" value="F:RNA binding"/>
    <property type="evidence" value="ECO:0007669"/>
    <property type="project" value="TreeGrafter"/>
</dbReference>
<dbReference type="GO" id="GO:0003735">
    <property type="term" value="F:structural constituent of ribosome"/>
    <property type="evidence" value="ECO:0007669"/>
    <property type="project" value="InterPro"/>
</dbReference>
<dbReference type="GO" id="GO:0006412">
    <property type="term" value="P:translation"/>
    <property type="evidence" value="ECO:0007669"/>
    <property type="project" value="UniProtKB-UniRule"/>
</dbReference>
<dbReference type="FunFam" id="3.30.230.10:FF:000001">
    <property type="entry name" value="30S ribosomal protein S9"/>
    <property type="match status" value="1"/>
</dbReference>
<dbReference type="Gene3D" id="3.30.230.10">
    <property type="match status" value="1"/>
</dbReference>
<dbReference type="HAMAP" id="MF_00532_B">
    <property type="entry name" value="Ribosomal_uS9_B"/>
    <property type="match status" value="1"/>
</dbReference>
<dbReference type="InterPro" id="IPR020568">
    <property type="entry name" value="Ribosomal_Su5_D2-typ_SF"/>
</dbReference>
<dbReference type="InterPro" id="IPR000754">
    <property type="entry name" value="Ribosomal_uS9"/>
</dbReference>
<dbReference type="InterPro" id="IPR023035">
    <property type="entry name" value="Ribosomal_uS9_bac/plastid"/>
</dbReference>
<dbReference type="InterPro" id="IPR020574">
    <property type="entry name" value="Ribosomal_uS9_CS"/>
</dbReference>
<dbReference type="InterPro" id="IPR014721">
    <property type="entry name" value="Ribsml_uS5_D2-typ_fold_subgr"/>
</dbReference>
<dbReference type="NCBIfam" id="NF001099">
    <property type="entry name" value="PRK00132.1"/>
    <property type="match status" value="1"/>
</dbReference>
<dbReference type="PANTHER" id="PTHR21569">
    <property type="entry name" value="RIBOSOMAL PROTEIN S9"/>
    <property type="match status" value="1"/>
</dbReference>
<dbReference type="PANTHER" id="PTHR21569:SF1">
    <property type="entry name" value="SMALL RIBOSOMAL SUBUNIT PROTEIN US9M"/>
    <property type="match status" value="1"/>
</dbReference>
<dbReference type="Pfam" id="PF00380">
    <property type="entry name" value="Ribosomal_S9"/>
    <property type="match status" value="1"/>
</dbReference>
<dbReference type="SUPFAM" id="SSF54211">
    <property type="entry name" value="Ribosomal protein S5 domain 2-like"/>
    <property type="match status" value="1"/>
</dbReference>
<dbReference type="PROSITE" id="PS00360">
    <property type="entry name" value="RIBOSOMAL_S9"/>
    <property type="match status" value="1"/>
</dbReference>
<sequence>MIGNWNYGTGRRKTSVARVFIKKGTGKIVVNGKPVDEFFARETGRMVVRQPLALTGHLESFDIKVNVIGGGETGQAGAVRHGITRALIDYDATLKPALSQAGFVTRDAREVERKKVGLRKARRRKQFSKR</sequence>